<keyword id="KW-0963">Cytoplasm</keyword>
<keyword id="KW-0378">Hydrolase</keyword>
<keyword id="KW-0540">Nuclease</keyword>
<keyword id="KW-0690">Ribosome biogenesis</keyword>
<proteinExistence type="inferred from homology"/>
<feature type="chain" id="PRO_0000172028" description="Putative pre-16S rRNA nuclease">
    <location>
        <begin position="1"/>
        <end position="133"/>
    </location>
</feature>
<gene>
    <name type="ordered locus">BB4404</name>
</gene>
<dbReference type="EC" id="3.1.-.-" evidence="1"/>
<dbReference type="EMBL" id="BX640450">
    <property type="protein sequence ID" value="CAE34767.1"/>
    <property type="molecule type" value="Genomic_DNA"/>
</dbReference>
<dbReference type="SMR" id="Q7WF76"/>
<dbReference type="KEGG" id="bbr:BB4404"/>
<dbReference type="eggNOG" id="COG0816">
    <property type="taxonomic scope" value="Bacteria"/>
</dbReference>
<dbReference type="HOGENOM" id="CLU_098240_3_2_4"/>
<dbReference type="Proteomes" id="UP000001027">
    <property type="component" value="Chromosome"/>
</dbReference>
<dbReference type="GO" id="GO:0005829">
    <property type="term" value="C:cytosol"/>
    <property type="evidence" value="ECO:0007669"/>
    <property type="project" value="TreeGrafter"/>
</dbReference>
<dbReference type="GO" id="GO:0004518">
    <property type="term" value="F:nuclease activity"/>
    <property type="evidence" value="ECO:0007669"/>
    <property type="project" value="UniProtKB-KW"/>
</dbReference>
<dbReference type="GO" id="GO:0000967">
    <property type="term" value="P:rRNA 5'-end processing"/>
    <property type="evidence" value="ECO:0007669"/>
    <property type="project" value="UniProtKB-UniRule"/>
</dbReference>
<dbReference type="CDD" id="cd16964">
    <property type="entry name" value="YqgF"/>
    <property type="match status" value="1"/>
</dbReference>
<dbReference type="Gene3D" id="3.30.420.140">
    <property type="entry name" value="YqgF/RNase H-like domain"/>
    <property type="match status" value="1"/>
</dbReference>
<dbReference type="HAMAP" id="MF_00651">
    <property type="entry name" value="Nuclease_YqgF"/>
    <property type="match status" value="1"/>
</dbReference>
<dbReference type="InterPro" id="IPR012337">
    <property type="entry name" value="RNaseH-like_sf"/>
</dbReference>
<dbReference type="InterPro" id="IPR005227">
    <property type="entry name" value="YqgF"/>
</dbReference>
<dbReference type="InterPro" id="IPR006641">
    <property type="entry name" value="YqgF/RNaseH-like_dom"/>
</dbReference>
<dbReference type="InterPro" id="IPR037027">
    <property type="entry name" value="YqgF/RNaseH-like_dom_sf"/>
</dbReference>
<dbReference type="NCBIfam" id="TIGR00250">
    <property type="entry name" value="RNAse_H_YqgF"/>
    <property type="match status" value="1"/>
</dbReference>
<dbReference type="PANTHER" id="PTHR33317">
    <property type="entry name" value="POLYNUCLEOTIDYL TRANSFERASE, RIBONUCLEASE H-LIKE SUPERFAMILY PROTEIN"/>
    <property type="match status" value="1"/>
</dbReference>
<dbReference type="PANTHER" id="PTHR33317:SF4">
    <property type="entry name" value="POLYNUCLEOTIDYL TRANSFERASE, RIBONUCLEASE H-LIKE SUPERFAMILY PROTEIN"/>
    <property type="match status" value="1"/>
</dbReference>
<dbReference type="Pfam" id="PF03652">
    <property type="entry name" value="RuvX"/>
    <property type="match status" value="1"/>
</dbReference>
<dbReference type="SMART" id="SM00732">
    <property type="entry name" value="YqgFc"/>
    <property type="match status" value="1"/>
</dbReference>
<dbReference type="SUPFAM" id="SSF53098">
    <property type="entry name" value="Ribonuclease H-like"/>
    <property type="match status" value="1"/>
</dbReference>
<reference key="1">
    <citation type="journal article" date="2003" name="Nat. Genet.">
        <title>Comparative analysis of the genome sequences of Bordetella pertussis, Bordetella parapertussis and Bordetella bronchiseptica.</title>
        <authorList>
            <person name="Parkhill J."/>
            <person name="Sebaihia M."/>
            <person name="Preston A."/>
            <person name="Murphy L.D."/>
            <person name="Thomson N.R."/>
            <person name="Harris D.E."/>
            <person name="Holden M.T.G."/>
            <person name="Churcher C.M."/>
            <person name="Bentley S.D."/>
            <person name="Mungall K.L."/>
            <person name="Cerdeno-Tarraga A.-M."/>
            <person name="Temple L."/>
            <person name="James K.D."/>
            <person name="Harris B."/>
            <person name="Quail M.A."/>
            <person name="Achtman M."/>
            <person name="Atkin R."/>
            <person name="Baker S."/>
            <person name="Basham D."/>
            <person name="Bason N."/>
            <person name="Cherevach I."/>
            <person name="Chillingworth T."/>
            <person name="Collins M."/>
            <person name="Cronin A."/>
            <person name="Davis P."/>
            <person name="Doggett J."/>
            <person name="Feltwell T."/>
            <person name="Goble A."/>
            <person name="Hamlin N."/>
            <person name="Hauser H."/>
            <person name="Holroyd S."/>
            <person name="Jagels K."/>
            <person name="Leather S."/>
            <person name="Moule S."/>
            <person name="Norberczak H."/>
            <person name="O'Neil S."/>
            <person name="Ormond D."/>
            <person name="Price C."/>
            <person name="Rabbinowitsch E."/>
            <person name="Rutter S."/>
            <person name="Sanders M."/>
            <person name="Saunders D."/>
            <person name="Seeger K."/>
            <person name="Sharp S."/>
            <person name="Simmonds M."/>
            <person name="Skelton J."/>
            <person name="Squares R."/>
            <person name="Squares S."/>
            <person name="Stevens K."/>
            <person name="Unwin L."/>
            <person name="Whitehead S."/>
            <person name="Barrell B.G."/>
            <person name="Maskell D.J."/>
        </authorList>
    </citation>
    <scope>NUCLEOTIDE SEQUENCE [LARGE SCALE GENOMIC DNA]</scope>
    <source>
        <strain>ATCC BAA-588 / NCTC 13252 / RB50</strain>
    </source>
</reference>
<protein>
    <recommendedName>
        <fullName evidence="1">Putative pre-16S rRNA nuclease</fullName>
        <ecNumber evidence="1">3.1.-.-</ecNumber>
    </recommendedName>
</protein>
<accession>Q7WF76</accession>
<organism>
    <name type="scientific">Bordetella bronchiseptica (strain ATCC BAA-588 / NCTC 13252 / RB50)</name>
    <name type="common">Alcaligenes bronchisepticus</name>
    <dbReference type="NCBI Taxonomy" id="257310"/>
    <lineage>
        <taxon>Bacteria</taxon>
        <taxon>Pseudomonadati</taxon>
        <taxon>Pseudomonadota</taxon>
        <taxon>Betaproteobacteria</taxon>
        <taxon>Burkholderiales</taxon>
        <taxon>Alcaligenaceae</taxon>
        <taxon>Bordetella</taxon>
    </lineage>
</organism>
<evidence type="ECO:0000255" key="1">
    <source>
        <dbReference type="HAMAP-Rule" id="MF_00651"/>
    </source>
</evidence>
<name>YQGF_BORBR</name>
<comment type="function">
    <text evidence="1">Could be a nuclease involved in processing of the 5'-end of pre-16S rRNA.</text>
</comment>
<comment type="subcellular location">
    <subcellularLocation>
        <location evidence="1">Cytoplasm</location>
    </subcellularLocation>
</comment>
<comment type="similarity">
    <text evidence="1">Belongs to the YqgF nuclease family.</text>
</comment>
<sequence length="133" mass="14619">MPEETLLAFDFGEKKIGIAIGNTLTRQARPLEIIFSETRAARFGRIGQLLQEWQPQRAVVGLPLTLDGQEQPASARARRFANQLHGRFGLAVELVDERGSSMEAQQLLGTHAADDAVAAAVILQRYLDTLPQP</sequence>